<organism>
    <name type="scientific">Syntrophobacter fumaroxidans (strain DSM 10017 / MPOB)</name>
    <dbReference type="NCBI Taxonomy" id="335543"/>
    <lineage>
        <taxon>Bacteria</taxon>
        <taxon>Pseudomonadati</taxon>
        <taxon>Thermodesulfobacteriota</taxon>
        <taxon>Syntrophobacteria</taxon>
        <taxon>Syntrophobacterales</taxon>
        <taxon>Syntrophobacteraceae</taxon>
        <taxon>Syntrophobacter</taxon>
    </lineage>
</organism>
<reference key="1">
    <citation type="submission" date="2006-10" db="EMBL/GenBank/DDBJ databases">
        <title>Complete sequence of Syntrophobacter fumaroxidans MPOB.</title>
        <authorList>
            <consortium name="US DOE Joint Genome Institute"/>
            <person name="Copeland A."/>
            <person name="Lucas S."/>
            <person name="Lapidus A."/>
            <person name="Barry K."/>
            <person name="Detter J.C."/>
            <person name="Glavina del Rio T."/>
            <person name="Hammon N."/>
            <person name="Israni S."/>
            <person name="Pitluck S."/>
            <person name="Goltsman E.G."/>
            <person name="Martinez M."/>
            <person name="Schmutz J."/>
            <person name="Larimer F."/>
            <person name="Land M."/>
            <person name="Hauser L."/>
            <person name="Kyrpides N."/>
            <person name="Kim E."/>
            <person name="Boone D.R."/>
            <person name="Brockman F."/>
            <person name="Culley D."/>
            <person name="Ferry J."/>
            <person name="Gunsalus R."/>
            <person name="McInerney M.J."/>
            <person name="Morrison M."/>
            <person name="Plugge C."/>
            <person name="Rohlin L."/>
            <person name="Scholten J."/>
            <person name="Sieber J."/>
            <person name="Stams A.J.M."/>
            <person name="Worm P."/>
            <person name="Henstra A.M."/>
            <person name="Richardson P."/>
        </authorList>
    </citation>
    <scope>NUCLEOTIDE SEQUENCE [LARGE SCALE GENOMIC DNA]</scope>
    <source>
        <strain>DSM 10017 / MPOB</strain>
    </source>
</reference>
<protein>
    <recommendedName>
        <fullName evidence="1">Phosphoserine aminotransferase</fullName>
        <ecNumber evidence="1">2.6.1.52</ecNumber>
    </recommendedName>
    <alternativeName>
        <fullName evidence="1">Phosphohydroxythreonine aminotransferase</fullName>
        <shortName evidence="1">PSAT</shortName>
    </alternativeName>
</protein>
<gene>
    <name evidence="1" type="primary">serC</name>
    <name type="ordered locus">Sfum_2083</name>
</gene>
<feature type="chain" id="PRO_1000058227" description="Phosphoserine aminotransferase">
    <location>
        <begin position="1"/>
        <end position="360"/>
    </location>
</feature>
<feature type="binding site" evidence="1">
    <location>
        <position position="43"/>
    </location>
    <ligand>
        <name>L-glutamate</name>
        <dbReference type="ChEBI" id="CHEBI:29985"/>
    </ligand>
</feature>
<feature type="binding site" evidence="1">
    <location>
        <begin position="77"/>
        <end position="78"/>
    </location>
    <ligand>
        <name>pyridoxal 5'-phosphate</name>
        <dbReference type="ChEBI" id="CHEBI:597326"/>
    </ligand>
</feature>
<feature type="binding site" evidence="1">
    <location>
        <position position="103"/>
    </location>
    <ligand>
        <name>pyridoxal 5'-phosphate</name>
        <dbReference type="ChEBI" id="CHEBI:597326"/>
    </ligand>
</feature>
<feature type="binding site" evidence="1">
    <location>
        <position position="152"/>
    </location>
    <ligand>
        <name>pyridoxal 5'-phosphate</name>
        <dbReference type="ChEBI" id="CHEBI:597326"/>
    </ligand>
</feature>
<feature type="binding site" evidence="1">
    <location>
        <position position="172"/>
    </location>
    <ligand>
        <name>pyridoxal 5'-phosphate</name>
        <dbReference type="ChEBI" id="CHEBI:597326"/>
    </ligand>
</feature>
<feature type="binding site" evidence="1">
    <location>
        <position position="195"/>
    </location>
    <ligand>
        <name>pyridoxal 5'-phosphate</name>
        <dbReference type="ChEBI" id="CHEBI:597326"/>
    </ligand>
</feature>
<feature type="binding site" evidence="1">
    <location>
        <begin position="237"/>
        <end position="238"/>
    </location>
    <ligand>
        <name>pyridoxal 5'-phosphate</name>
        <dbReference type="ChEBI" id="CHEBI:597326"/>
    </ligand>
</feature>
<feature type="modified residue" description="N6-(pyridoxal phosphate)lysine" evidence="1">
    <location>
        <position position="196"/>
    </location>
</feature>
<sequence>MAKRIYNFNAGPAVLPLPVLEEMQREMLDFHGSGMSILEVSHRSKWFEDVLDEAIVRIKRLLKLDDTYQVLFLQGGASLQFCMVPMNLALPGKPVSYVETDMWSTKAIQEARIQGKEVEVAASSGDREFTYIPGQVKVRPDSAYLHITSNNTIRGTQWHSFPDTGNIPLVSDMSSDIFSRVFDPKPFGLIYAGAQKNAGPAGVTLVIVREDMLKRVPKELPTMLKYTTFSEKKSMFNTPPCFAIYTVSLVTKWLEETVGGIARMEEQNRRKGETLYRYLDSQDYYRGTAEPDSRSLMNVTFRLPDAALDKFVKEATAAGLGGLKGHRSVGGCRASLYNATPLEGVEALVDFMKEFVRKNG</sequence>
<keyword id="KW-0028">Amino-acid biosynthesis</keyword>
<keyword id="KW-0032">Aminotransferase</keyword>
<keyword id="KW-0963">Cytoplasm</keyword>
<keyword id="KW-0663">Pyridoxal phosphate</keyword>
<keyword id="KW-0664">Pyridoxine biosynthesis</keyword>
<keyword id="KW-1185">Reference proteome</keyword>
<keyword id="KW-0718">Serine biosynthesis</keyword>
<keyword id="KW-0808">Transferase</keyword>
<proteinExistence type="inferred from homology"/>
<name>SERC_SYNFM</name>
<accession>A0LK14</accession>
<evidence type="ECO:0000255" key="1">
    <source>
        <dbReference type="HAMAP-Rule" id="MF_00160"/>
    </source>
</evidence>
<comment type="function">
    <text evidence="1">Catalyzes the reversible conversion of 3-phosphohydroxypyruvate to phosphoserine and of 3-hydroxy-2-oxo-4-phosphonooxybutanoate to phosphohydroxythreonine.</text>
</comment>
<comment type="catalytic activity">
    <reaction evidence="1">
        <text>O-phospho-L-serine + 2-oxoglutarate = 3-phosphooxypyruvate + L-glutamate</text>
        <dbReference type="Rhea" id="RHEA:14329"/>
        <dbReference type="ChEBI" id="CHEBI:16810"/>
        <dbReference type="ChEBI" id="CHEBI:18110"/>
        <dbReference type="ChEBI" id="CHEBI:29985"/>
        <dbReference type="ChEBI" id="CHEBI:57524"/>
        <dbReference type="EC" id="2.6.1.52"/>
    </reaction>
</comment>
<comment type="catalytic activity">
    <reaction evidence="1">
        <text>4-(phosphooxy)-L-threonine + 2-oxoglutarate = (R)-3-hydroxy-2-oxo-4-phosphooxybutanoate + L-glutamate</text>
        <dbReference type="Rhea" id="RHEA:16573"/>
        <dbReference type="ChEBI" id="CHEBI:16810"/>
        <dbReference type="ChEBI" id="CHEBI:29985"/>
        <dbReference type="ChEBI" id="CHEBI:58452"/>
        <dbReference type="ChEBI" id="CHEBI:58538"/>
        <dbReference type="EC" id="2.6.1.52"/>
    </reaction>
</comment>
<comment type="cofactor">
    <cofactor evidence="1">
        <name>pyridoxal 5'-phosphate</name>
        <dbReference type="ChEBI" id="CHEBI:597326"/>
    </cofactor>
    <text evidence="1">Binds 1 pyridoxal phosphate per subunit.</text>
</comment>
<comment type="pathway">
    <text evidence="1">Amino-acid biosynthesis; L-serine biosynthesis; L-serine from 3-phospho-D-glycerate: step 2/3.</text>
</comment>
<comment type="pathway">
    <text evidence="1">Cofactor biosynthesis; pyridoxine 5'-phosphate biosynthesis; pyridoxine 5'-phosphate from D-erythrose 4-phosphate: step 3/5.</text>
</comment>
<comment type="subunit">
    <text evidence="1">Homodimer.</text>
</comment>
<comment type="subcellular location">
    <subcellularLocation>
        <location evidence="1">Cytoplasm</location>
    </subcellularLocation>
</comment>
<comment type="similarity">
    <text evidence="1">Belongs to the class-V pyridoxal-phosphate-dependent aminotransferase family. SerC subfamily.</text>
</comment>
<dbReference type="EC" id="2.6.1.52" evidence="1"/>
<dbReference type="EMBL" id="CP000478">
    <property type="protein sequence ID" value="ABK17766.1"/>
    <property type="molecule type" value="Genomic_DNA"/>
</dbReference>
<dbReference type="RefSeq" id="WP_011698935.1">
    <property type="nucleotide sequence ID" value="NC_008554.1"/>
</dbReference>
<dbReference type="SMR" id="A0LK14"/>
<dbReference type="FunCoup" id="A0LK14">
    <property type="interactions" value="460"/>
</dbReference>
<dbReference type="STRING" id="335543.Sfum_2083"/>
<dbReference type="KEGG" id="sfu:Sfum_2083"/>
<dbReference type="eggNOG" id="COG1932">
    <property type="taxonomic scope" value="Bacteria"/>
</dbReference>
<dbReference type="HOGENOM" id="CLU_034866_0_2_7"/>
<dbReference type="InParanoid" id="A0LK14"/>
<dbReference type="UniPathway" id="UPA00135">
    <property type="reaction ID" value="UER00197"/>
</dbReference>
<dbReference type="UniPathway" id="UPA00244">
    <property type="reaction ID" value="UER00311"/>
</dbReference>
<dbReference type="Proteomes" id="UP000001784">
    <property type="component" value="Chromosome"/>
</dbReference>
<dbReference type="GO" id="GO:0005737">
    <property type="term" value="C:cytoplasm"/>
    <property type="evidence" value="ECO:0007669"/>
    <property type="project" value="UniProtKB-SubCell"/>
</dbReference>
<dbReference type="GO" id="GO:0004648">
    <property type="term" value="F:O-phospho-L-serine:2-oxoglutarate aminotransferase activity"/>
    <property type="evidence" value="ECO:0007669"/>
    <property type="project" value="UniProtKB-UniRule"/>
</dbReference>
<dbReference type="GO" id="GO:0030170">
    <property type="term" value="F:pyridoxal phosphate binding"/>
    <property type="evidence" value="ECO:0007669"/>
    <property type="project" value="UniProtKB-UniRule"/>
</dbReference>
<dbReference type="GO" id="GO:0006564">
    <property type="term" value="P:L-serine biosynthetic process"/>
    <property type="evidence" value="ECO:0007669"/>
    <property type="project" value="UniProtKB-UniRule"/>
</dbReference>
<dbReference type="GO" id="GO:0008615">
    <property type="term" value="P:pyridoxine biosynthetic process"/>
    <property type="evidence" value="ECO:0007669"/>
    <property type="project" value="UniProtKB-UniRule"/>
</dbReference>
<dbReference type="FunFam" id="3.40.640.10:FF:000010">
    <property type="entry name" value="Phosphoserine aminotransferase"/>
    <property type="match status" value="1"/>
</dbReference>
<dbReference type="FunFam" id="3.90.1150.10:FF:000006">
    <property type="entry name" value="Phosphoserine aminotransferase"/>
    <property type="match status" value="1"/>
</dbReference>
<dbReference type="Gene3D" id="3.90.1150.10">
    <property type="entry name" value="Aspartate Aminotransferase, domain 1"/>
    <property type="match status" value="1"/>
</dbReference>
<dbReference type="Gene3D" id="3.40.640.10">
    <property type="entry name" value="Type I PLP-dependent aspartate aminotransferase-like (Major domain)"/>
    <property type="match status" value="1"/>
</dbReference>
<dbReference type="HAMAP" id="MF_00160">
    <property type="entry name" value="SerC_aminotrans_5"/>
    <property type="match status" value="1"/>
</dbReference>
<dbReference type="InterPro" id="IPR000192">
    <property type="entry name" value="Aminotrans_V_dom"/>
</dbReference>
<dbReference type="InterPro" id="IPR020578">
    <property type="entry name" value="Aminotrans_V_PyrdxlP_BS"/>
</dbReference>
<dbReference type="InterPro" id="IPR022278">
    <property type="entry name" value="Pser_aminoTfrase"/>
</dbReference>
<dbReference type="InterPro" id="IPR015424">
    <property type="entry name" value="PyrdxlP-dep_Trfase"/>
</dbReference>
<dbReference type="InterPro" id="IPR015421">
    <property type="entry name" value="PyrdxlP-dep_Trfase_major"/>
</dbReference>
<dbReference type="InterPro" id="IPR015422">
    <property type="entry name" value="PyrdxlP-dep_Trfase_small"/>
</dbReference>
<dbReference type="NCBIfam" id="NF003764">
    <property type="entry name" value="PRK05355.1"/>
    <property type="match status" value="1"/>
</dbReference>
<dbReference type="NCBIfam" id="TIGR01364">
    <property type="entry name" value="serC_1"/>
    <property type="match status" value="1"/>
</dbReference>
<dbReference type="PANTHER" id="PTHR43247">
    <property type="entry name" value="PHOSPHOSERINE AMINOTRANSFERASE"/>
    <property type="match status" value="1"/>
</dbReference>
<dbReference type="PANTHER" id="PTHR43247:SF1">
    <property type="entry name" value="PHOSPHOSERINE AMINOTRANSFERASE"/>
    <property type="match status" value="1"/>
</dbReference>
<dbReference type="Pfam" id="PF00266">
    <property type="entry name" value="Aminotran_5"/>
    <property type="match status" value="1"/>
</dbReference>
<dbReference type="PIRSF" id="PIRSF000525">
    <property type="entry name" value="SerC"/>
    <property type="match status" value="1"/>
</dbReference>
<dbReference type="SUPFAM" id="SSF53383">
    <property type="entry name" value="PLP-dependent transferases"/>
    <property type="match status" value="1"/>
</dbReference>
<dbReference type="PROSITE" id="PS00595">
    <property type="entry name" value="AA_TRANSFER_CLASS_5"/>
    <property type="match status" value="1"/>
</dbReference>